<name>TRUA_THIDA</name>
<organism>
    <name type="scientific">Thiobacillus denitrificans (strain ATCC 25259 / T1)</name>
    <dbReference type="NCBI Taxonomy" id="292415"/>
    <lineage>
        <taxon>Bacteria</taxon>
        <taxon>Pseudomonadati</taxon>
        <taxon>Pseudomonadota</taxon>
        <taxon>Betaproteobacteria</taxon>
        <taxon>Nitrosomonadales</taxon>
        <taxon>Thiobacillaceae</taxon>
        <taxon>Thiobacillus</taxon>
    </lineage>
</organism>
<sequence length="260" mass="28713">MMRIAVGLEYRGVGFCGWQSQPQACGVQDAVEKAVSAIAGEAITVTAAGRTDTGVHAALQIVHFDTTSVRPLTAWVRGVNSHLPAGVAVLWAREVDAEFHARFAAFERGYRYVLLNHPVRPGLNAGLVGWHHRPLDVACMNRAASPLIGRHDFSAFRAAECQARSPVKELRRALIERRGDYLLCDFRADGFLHHMVRNLMGCLVQIGAGGRPPEWLHEVLAGRDRTRAAPTFEAAGLYLTHIRYPARFALPESSERWPFA</sequence>
<accession>Q3SHL7</accession>
<comment type="function">
    <text evidence="1">Formation of pseudouridine at positions 38, 39 and 40 in the anticodon stem and loop of transfer RNAs.</text>
</comment>
<comment type="catalytic activity">
    <reaction evidence="1">
        <text>uridine(38/39/40) in tRNA = pseudouridine(38/39/40) in tRNA</text>
        <dbReference type="Rhea" id="RHEA:22376"/>
        <dbReference type="Rhea" id="RHEA-COMP:10085"/>
        <dbReference type="Rhea" id="RHEA-COMP:10087"/>
        <dbReference type="ChEBI" id="CHEBI:65314"/>
        <dbReference type="ChEBI" id="CHEBI:65315"/>
        <dbReference type="EC" id="5.4.99.12"/>
    </reaction>
</comment>
<comment type="subunit">
    <text evidence="1">Homodimer.</text>
</comment>
<comment type="similarity">
    <text evidence="1">Belongs to the tRNA pseudouridine synthase TruA family.</text>
</comment>
<protein>
    <recommendedName>
        <fullName evidence="1">tRNA pseudouridine synthase A</fullName>
        <ecNumber evidence="1">5.4.99.12</ecNumber>
    </recommendedName>
    <alternativeName>
        <fullName evidence="1">tRNA pseudouridine(38-40) synthase</fullName>
    </alternativeName>
    <alternativeName>
        <fullName evidence="1">tRNA pseudouridylate synthase I</fullName>
    </alternativeName>
    <alternativeName>
        <fullName evidence="1">tRNA-uridine isomerase I</fullName>
    </alternativeName>
</protein>
<reference key="1">
    <citation type="journal article" date="2006" name="J. Bacteriol.">
        <title>The genome sequence of the obligately chemolithoautotrophic, facultatively anaerobic bacterium Thiobacillus denitrificans.</title>
        <authorList>
            <person name="Beller H.R."/>
            <person name="Chain P.S."/>
            <person name="Letain T.E."/>
            <person name="Chakicherla A."/>
            <person name="Larimer F.W."/>
            <person name="Richardson P.M."/>
            <person name="Coleman M.A."/>
            <person name="Wood A.P."/>
            <person name="Kelly D.P."/>
        </authorList>
    </citation>
    <scope>NUCLEOTIDE SEQUENCE [LARGE SCALE GENOMIC DNA]</scope>
    <source>
        <strain>ATCC 25259 / T1</strain>
    </source>
</reference>
<proteinExistence type="inferred from homology"/>
<gene>
    <name evidence="1" type="primary">truA</name>
    <name type="ordered locus">Tbd_1916</name>
</gene>
<evidence type="ECO:0000255" key="1">
    <source>
        <dbReference type="HAMAP-Rule" id="MF_00171"/>
    </source>
</evidence>
<dbReference type="EC" id="5.4.99.12" evidence="1"/>
<dbReference type="EMBL" id="CP000116">
    <property type="protein sequence ID" value="AAZ97869.1"/>
    <property type="molecule type" value="Genomic_DNA"/>
</dbReference>
<dbReference type="SMR" id="Q3SHL7"/>
<dbReference type="STRING" id="292415.Tbd_1916"/>
<dbReference type="KEGG" id="tbd:Tbd_1916"/>
<dbReference type="eggNOG" id="COG0101">
    <property type="taxonomic scope" value="Bacteria"/>
</dbReference>
<dbReference type="HOGENOM" id="CLU_014673_0_2_4"/>
<dbReference type="Proteomes" id="UP000008291">
    <property type="component" value="Chromosome"/>
</dbReference>
<dbReference type="GO" id="GO:0003723">
    <property type="term" value="F:RNA binding"/>
    <property type="evidence" value="ECO:0007669"/>
    <property type="project" value="InterPro"/>
</dbReference>
<dbReference type="GO" id="GO:0160147">
    <property type="term" value="F:tRNA pseudouridine(38-40) synthase activity"/>
    <property type="evidence" value="ECO:0007669"/>
    <property type="project" value="UniProtKB-EC"/>
</dbReference>
<dbReference type="GO" id="GO:0031119">
    <property type="term" value="P:tRNA pseudouridine synthesis"/>
    <property type="evidence" value="ECO:0007669"/>
    <property type="project" value="UniProtKB-UniRule"/>
</dbReference>
<dbReference type="CDD" id="cd02570">
    <property type="entry name" value="PseudoU_synth_EcTruA"/>
    <property type="match status" value="1"/>
</dbReference>
<dbReference type="FunFam" id="3.30.70.580:FF:000001">
    <property type="entry name" value="tRNA pseudouridine synthase A"/>
    <property type="match status" value="1"/>
</dbReference>
<dbReference type="Gene3D" id="3.30.70.660">
    <property type="entry name" value="Pseudouridine synthase I, catalytic domain, C-terminal subdomain"/>
    <property type="match status" value="1"/>
</dbReference>
<dbReference type="Gene3D" id="3.30.70.580">
    <property type="entry name" value="Pseudouridine synthase I, catalytic domain, N-terminal subdomain"/>
    <property type="match status" value="1"/>
</dbReference>
<dbReference type="HAMAP" id="MF_00171">
    <property type="entry name" value="TruA"/>
    <property type="match status" value="1"/>
</dbReference>
<dbReference type="InterPro" id="IPR020103">
    <property type="entry name" value="PsdUridine_synth_cat_dom_sf"/>
</dbReference>
<dbReference type="InterPro" id="IPR001406">
    <property type="entry name" value="PsdUridine_synth_TruA"/>
</dbReference>
<dbReference type="InterPro" id="IPR020097">
    <property type="entry name" value="PsdUridine_synth_TruA_a/b_dom"/>
</dbReference>
<dbReference type="InterPro" id="IPR020095">
    <property type="entry name" value="PsdUridine_synth_TruA_C"/>
</dbReference>
<dbReference type="InterPro" id="IPR020094">
    <property type="entry name" value="TruA/RsuA/RluB/E/F_N"/>
</dbReference>
<dbReference type="NCBIfam" id="TIGR00071">
    <property type="entry name" value="hisT_truA"/>
    <property type="match status" value="1"/>
</dbReference>
<dbReference type="PANTHER" id="PTHR11142">
    <property type="entry name" value="PSEUDOURIDYLATE SYNTHASE"/>
    <property type="match status" value="1"/>
</dbReference>
<dbReference type="PANTHER" id="PTHR11142:SF0">
    <property type="entry name" value="TRNA PSEUDOURIDINE SYNTHASE-LIKE 1"/>
    <property type="match status" value="1"/>
</dbReference>
<dbReference type="Pfam" id="PF01416">
    <property type="entry name" value="PseudoU_synth_1"/>
    <property type="match status" value="2"/>
</dbReference>
<dbReference type="PIRSF" id="PIRSF001430">
    <property type="entry name" value="tRNA_psdUrid_synth"/>
    <property type="match status" value="1"/>
</dbReference>
<dbReference type="SUPFAM" id="SSF55120">
    <property type="entry name" value="Pseudouridine synthase"/>
    <property type="match status" value="1"/>
</dbReference>
<keyword id="KW-0413">Isomerase</keyword>
<keyword id="KW-1185">Reference proteome</keyword>
<keyword id="KW-0819">tRNA processing</keyword>
<feature type="chain" id="PRO_1000203703" description="tRNA pseudouridine synthase A">
    <location>
        <begin position="1"/>
        <end position="260"/>
    </location>
</feature>
<feature type="active site" description="Nucleophile" evidence="1">
    <location>
        <position position="52"/>
    </location>
</feature>
<feature type="binding site" evidence="1">
    <location>
        <position position="110"/>
    </location>
    <ligand>
        <name>substrate</name>
    </ligand>
</feature>